<keyword id="KW-0963">Cytoplasm</keyword>
<keyword id="KW-0501">Molybdenum cofactor biosynthesis</keyword>
<reference key="1">
    <citation type="journal article" date="2011" name="J. Bacteriol.">
        <title>Comparative genomics of 28 Salmonella enterica isolates: evidence for CRISPR-mediated adaptive sublineage evolution.</title>
        <authorList>
            <person name="Fricke W.F."/>
            <person name="Mammel M.K."/>
            <person name="McDermott P.F."/>
            <person name="Tartera C."/>
            <person name="White D.G."/>
            <person name="Leclerc J.E."/>
            <person name="Ravel J."/>
            <person name="Cebula T.A."/>
        </authorList>
    </citation>
    <scope>NUCLEOTIDE SEQUENCE [LARGE SCALE GENOMIC DNA]</scope>
    <source>
        <strain>SL254</strain>
    </source>
</reference>
<gene>
    <name evidence="1" type="primary">fdhD</name>
    <name type="ordered locus">SNSL254_A4319</name>
</gene>
<evidence type="ECO:0000255" key="1">
    <source>
        <dbReference type="HAMAP-Rule" id="MF_00187"/>
    </source>
</evidence>
<accession>B4SZY1</accession>
<organism>
    <name type="scientific">Salmonella newport (strain SL254)</name>
    <dbReference type="NCBI Taxonomy" id="423368"/>
    <lineage>
        <taxon>Bacteria</taxon>
        <taxon>Pseudomonadati</taxon>
        <taxon>Pseudomonadota</taxon>
        <taxon>Gammaproteobacteria</taxon>
        <taxon>Enterobacterales</taxon>
        <taxon>Enterobacteriaceae</taxon>
        <taxon>Salmonella</taxon>
    </lineage>
</organism>
<comment type="function">
    <text evidence="1">Required for formate dehydrogenase (FDH) activity. Acts as a sulfur carrier protein that transfers sulfur from IscS to the molybdenum cofactor prior to its insertion into FDH.</text>
</comment>
<comment type="subcellular location">
    <subcellularLocation>
        <location evidence="1">Cytoplasm</location>
    </subcellularLocation>
</comment>
<comment type="similarity">
    <text evidence="1">Belongs to the FdhD family.</text>
</comment>
<protein>
    <recommendedName>
        <fullName evidence="1">Sulfur carrier protein FdhD</fullName>
    </recommendedName>
</protein>
<feature type="chain" id="PRO_1000098791" description="Sulfur carrier protein FdhD">
    <location>
        <begin position="1"/>
        <end position="278"/>
    </location>
</feature>
<feature type="active site" description="Cysteine persulfide intermediate" evidence="1">
    <location>
        <position position="121"/>
    </location>
</feature>
<feature type="binding site" evidence="1">
    <location>
        <begin position="260"/>
        <end position="265"/>
    </location>
    <ligand>
        <name>Mo-bis(molybdopterin guanine dinucleotide)</name>
        <dbReference type="ChEBI" id="CHEBI:60539"/>
    </ligand>
</feature>
<dbReference type="EMBL" id="CP001113">
    <property type="protein sequence ID" value="ACF61166.1"/>
    <property type="molecule type" value="Genomic_DNA"/>
</dbReference>
<dbReference type="RefSeq" id="WP_001059744.1">
    <property type="nucleotide sequence ID" value="NZ_CCMR01000001.1"/>
</dbReference>
<dbReference type="SMR" id="B4SZY1"/>
<dbReference type="KEGG" id="see:SNSL254_A4319"/>
<dbReference type="HOGENOM" id="CLU_056887_2_0_6"/>
<dbReference type="Proteomes" id="UP000008824">
    <property type="component" value="Chromosome"/>
</dbReference>
<dbReference type="GO" id="GO:0005737">
    <property type="term" value="C:cytoplasm"/>
    <property type="evidence" value="ECO:0007669"/>
    <property type="project" value="UniProtKB-SubCell"/>
</dbReference>
<dbReference type="GO" id="GO:0097163">
    <property type="term" value="F:sulfur carrier activity"/>
    <property type="evidence" value="ECO:0007669"/>
    <property type="project" value="UniProtKB-UniRule"/>
</dbReference>
<dbReference type="GO" id="GO:0016783">
    <property type="term" value="F:sulfurtransferase activity"/>
    <property type="evidence" value="ECO:0007669"/>
    <property type="project" value="InterPro"/>
</dbReference>
<dbReference type="GO" id="GO:0006777">
    <property type="term" value="P:Mo-molybdopterin cofactor biosynthetic process"/>
    <property type="evidence" value="ECO:0007669"/>
    <property type="project" value="UniProtKB-UniRule"/>
</dbReference>
<dbReference type="Gene3D" id="3.10.20.10">
    <property type="match status" value="1"/>
</dbReference>
<dbReference type="Gene3D" id="3.40.140.10">
    <property type="entry name" value="Cytidine Deaminase, domain 2"/>
    <property type="match status" value="1"/>
</dbReference>
<dbReference type="HAMAP" id="MF_00187">
    <property type="entry name" value="FdhD"/>
    <property type="match status" value="1"/>
</dbReference>
<dbReference type="InterPro" id="IPR016193">
    <property type="entry name" value="Cytidine_deaminase-like"/>
</dbReference>
<dbReference type="InterPro" id="IPR003786">
    <property type="entry name" value="FdhD"/>
</dbReference>
<dbReference type="NCBIfam" id="TIGR00129">
    <property type="entry name" value="fdhD_narQ"/>
    <property type="match status" value="1"/>
</dbReference>
<dbReference type="PANTHER" id="PTHR30592">
    <property type="entry name" value="FORMATE DEHYDROGENASE"/>
    <property type="match status" value="1"/>
</dbReference>
<dbReference type="PANTHER" id="PTHR30592:SF1">
    <property type="entry name" value="SULFUR CARRIER PROTEIN FDHD"/>
    <property type="match status" value="1"/>
</dbReference>
<dbReference type="Pfam" id="PF02634">
    <property type="entry name" value="FdhD-NarQ"/>
    <property type="match status" value="1"/>
</dbReference>
<dbReference type="PIRSF" id="PIRSF015626">
    <property type="entry name" value="FdhD"/>
    <property type="match status" value="1"/>
</dbReference>
<dbReference type="SUPFAM" id="SSF53927">
    <property type="entry name" value="Cytidine deaminase-like"/>
    <property type="match status" value="1"/>
</dbReference>
<proteinExistence type="inferred from homology"/>
<sequence length="278" mass="30270">MNNILSEEVLNVTDFTTSRQLTLWKREDLQSPQLDDVAEEVPVALVYNGISHVVMMASPKDLTHFAMGFSLSEGIIDSPREIYGMDVVPSCNGLEVQIDLSSRRFMGLKARRRALAGRTGCGVCGVEQLNDIGKPVQPLPFSQTFNLGNLDRALKHLNDFQPTGKLTGCTHAAAWVMPSGELAGGHEDVGRHVALDKLLGRRATEGEEWRQGAALVSSRASYEMVQKSAMCGVEILFAVSAATTLAVEVAERCNLTLVGFCKPGRATIYTHPQRLIAD</sequence>
<name>FDHD_SALNS</name>